<accession>Q8K953</accession>
<comment type="function">
    <text evidence="1">One of the primary rRNA binding proteins. Required for association of the 30S and 50S subunits to form the 70S ribosome, for tRNA binding and peptide bond formation. It has been suggested to have peptidyltransferase activity; this is somewhat controversial. Makes several contacts with the 16S rRNA in the 70S ribosome.</text>
</comment>
<comment type="subunit">
    <text evidence="1">Part of the 50S ribosomal subunit. Forms a bridge to the 30S subunit in the 70S ribosome.</text>
</comment>
<comment type="similarity">
    <text evidence="1">Belongs to the universal ribosomal protein uL2 family.</text>
</comment>
<dbReference type="EMBL" id="AE013218">
    <property type="protein sequence ID" value="AAM68045.1"/>
    <property type="molecule type" value="Genomic_DNA"/>
</dbReference>
<dbReference type="RefSeq" id="WP_011054011.1">
    <property type="nucleotide sequence ID" value="NC_004061.1"/>
</dbReference>
<dbReference type="SMR" id="Q8K953"/>
<dbReference type="STRING" id="198804.BUsg_502"/>
<dbReference type="GeneID" id="93003977"/>
<dbReference type="KEGG" id="bas:BUsg_502"/>
<dbReference type="eggNOG" id="COG0090">
    <property type="taxonomic scope" value="Bacteria"/>
</dbReference>
<dbReference type="HOGENOM" id="CLU_036235_2_1_6"/>
<dbReference type="Proteomes" id="UP000000416">
    <property type="component" value="Chromosome"/>
</dbReference>
<dbReference type="GO" id="GO:0015934">
    <property type="term" value="C:large ribosomal subunit"/>
    <property type="evidence" value="ECO:0007669"/>
    <property type="project" value="InterPro"/>
</dbReference>
<dbReference type="GO" id="GO:0019843">
    <property type="term" value="F:rRNA binding"/>
    <property type="evidence" value="ECO:0007669"/>
    <property type="project" value="UniProtKB-UniRule"/>
</dbReference>
<dbReference type="GO" id="GO:0003735">
    <property type="term" value="F:structural constituent of ribosome"/>
    <property type="evidence" value="ECO:0007669"/>
    <property type="project" value="InterPro"/>
</dbReference>
<dbReference type="GO" id="GO:0016740">
    <property type="term" value="F:transferase activity"/>
    <property type="evidence" value="ECO:0007669"/>
    <property type="project" value="InterPro"/>
</dbReference>
<dbReference type="GO" id="GO:0002181">
    <property type="term" value="P:cytoplasmic translation"/>
    <property type="evidence" value="ECO:0007669"/>
    <property type="project" value="TreeGrafter"/>
</dbReference>
<dbReference type="FunFam" id="2.30.30.30:FF:000001">
    <property type="entry name" value="50S ribosomal protein L2"/>
    <property type="match status" value="1"/>
</dbReference>
<dbReference type="FunFam" id="2.40.50.140:FF:000003">
    <property type="entry name" value="50S ribosomal protein L2"/>
    <property type="match status" value="1"/>
</dbReference>
<dbReference type="FunFam" id="4.10.950.10:FF:000001">
    <property type="entry name" value="50S ribosomal protein L2"/>
    <property type="match status" value="1"/>
</dbReference>
<dbReference type="Gene3D" id="2.30.30.30">
    <property type="match status" value="1"/>
</dbReference>
<dbReference type="Gene3D" id="2.40.50.140">
    <property type="entry name" value="Nucleic acid-binding proteins"/>
    <property type="match status" value="1"/>
</dbReference>
<dbReference type="Gene3D" id="4.10.950.10">
    <property type="entry name" value="Ribosomal protein L2, domain 3"/>
    <property type="match status" value="1"/>
</dbReference>
<dbReference type="HAMAP" id="MF_01320_B">
    <property type="entry name" value="Ribosomal_uL2_B"/>
    <property type="match status" value="1"/>
</dbReference>
<dbReference type="InterPro" id="IPR012340">
    <property type="entry name" value="NA-bd_OB-fold"/>
</dbReference>
<dbReference type="InterPro" id="IPR014722">
    <property type="entry name" value="Rib_uL2_dom2"/>
</dbReference>
<dbReference type="InterPro" id="IPR002171">
    <property type="entry name" value="Ribosomal_uL2"/>
</dbReference>
<dbReference type="InterPro" id="IPR005880">
    <property type="entry name" value="Ribosomal_uL2_bac/org-type"/>
</dbReference>
<dbReference type="InterPro" id="IPR022669">
    <property type="entry name" value="Ribosomal_uL2_C"/>
</dbReference>
<dbReference type="InterPro" id="IPR022671">
    <property type="entry name" value="Ribosomal_uL2_CS"/>
</dbReference>
<dbReference type="InterPro" id="IPR014726">
    <property type="entry name" value="Ribosomal_uL2_dom3"/>
</dbReference>
<dbReference type="InterPro" id="IPR022666">
    <property type="entry name" value="Ribosomal_uL2_RNA-bd_dom"/>
</dbReference>
<dbReference type="InterPro" id="IPR008991">
    <property type="entry name" value="Translation_prot_SH3-like_sf"/>
</dbReference>
<dbReference type="NCBIfam" id="TIGR01171">
    <property type="entry name" value="rplB_bact"/>
    <property type="match status" value="1"/>
</dbReference>
<dbReference type="PANTHER" id="PTHR13691:SF5">
    <property type="entry name" value="LARGE RIBOSOMAL SUBUNIT PROTEIN UL2M"/>
    <property type="match status" value="1"/>
</dbReference>
<dbReference type="PANTHER" id="PTHR13691">
    <property type="entry name" value="RIBOSOMAL PROTEIN L2"/>
    <property type="match status" value="1"/>
</dbReference>
<dbReference type="Pfam" id="PF00181">
    <property type="entry name" value="Ribosomal_L2"/>
    <property type="match status" value="1"/>
</dbReference>
<dbReference type="Pfam" id="PF03947">
    <property type="entry name" value="Ribosomal_L2_C"/>
    <property type="match status" value="1"/>
</dbReference>
<dbReference type="PIRSF" id="PIRSF002158">
    <property type="entry name" value="Ribosomal_L2"/>
    <property type="match status" value="1"/>
</dbReference>
<dbReference type="SMART" id="SM01383">
    <property type="entry name" value="Ribosomal_L2"/>
    <property type="match status" value="1"/>
</dbReference>
<dbReference type="SMART" id="SM01382">
    <property type="entry name" value="Ribosomal_L2_C"/>
    <property type="match status" value="1"/>
</dbReference>
<dbReference type="SUPFAM" id="SSF50249">
    <property type="entry name" value="Nucleic acid-binding proteins"/>
    <property type="match status" value="1"/>
</dbReference>
<dbReference type="SUPFAM" id="SSF50104">
    <property type="entry name" value="Translation proteins SH3-like domain"/>
    <property type="match status" value="1"/>
</dbReference>
<dbReference type="PROSITE" id="PS00467">
    <property type="entry name" value="RIBOSOMAL_L2"/>
    <property type="match status" value="1"/>
</dbReference>
<reference key="1">
    <citation type="journal article" date="2002" name="Science">
        <title>50 million years of genomic stasis in endosymbiotic bacteria.</title>
        <authorList>
            <person name="Tamas I."/>
            <person name="Klasson L."/>
            <person name="Canbaeck B."/>
            <person name="Naeslund A.K."/>
            <person name="Eriksson A.-S."/>
            <person name="Wernegreen J.J."/>
            <person name="Sandstroem J.P."/>
            <person name="Moran N.A."/>
            <person name="Andersson S.G.E."/>
        </authorList>
    </citation>
    <scope>NUCLEOTIDE SEQUENCE [LARGE SCALE GENOMIC DNA]</scope>
    <source>
        <strain>Sg</strain>
    </source>
</reference>
<protein>
    <recommendedName>
        <fullName evidence="1">Large ribosomal subunit protein uL2</fullName>
    </recommendedName>
    <alternativeName>
        <fullName evidence="3">50S ribosomal protein L2</fullName>
    </alternativeName>
</protein>
<proteinExistence type="inferred from homology"/>
<gene>
    <name evidence="1" type="primary">rplB</name>
    <name type="ordered locus">BUsg_502</name>
</gene>
<sequence>MAIVKCKPTSPGRRHVIKVVNKELYKGKPYSLLLSKKSKTGGRNNNGRITTRHIGGGHKRIYRIIDFKRNKDNITASIERFEYDPNRSSNIALILYKDGKRNYILAPKNLKVGDTVISGENVPIKIGNSLPIKNIPVGSFIHNVEMRPGKGGQIARSAGSYVQLVACDKEYATLRLRSGEMRKTESNCRATIGEVGNSEHMLKVLGKAGASRWIGIRPTVRGTAMNPVDHPHGGGEGRNFGKHPVTPWGLQTKGKKTRKNKRTEKFILRHRHK</sequence>
<organism>
    <name type="scientific">Buchnera aphidicola subsp. Schizaphis graminum (strain Sg)</name>
    <dbReference type="NCBI Taxonomy" id="198804"/>
    <lineage>
        <taxon>Bacteria</taxon>
        <taxon>Pseudomonadati</taxon>
        <taxon>Pseudomonadota</taxon>
        <taxon>Gammaproteobacteria</taxon>
        <taxon>Enterobacterales</taxon>
        <taxon>Erwiniaceae</taxon>
        <taxon>Buchnera</taxon>
    </lineage>
</organism>
<name>RL2_BUCAP</name>
<evidence type="ECO:0000255" key="1">
    <source>
        <dbReference type="HAMAP-Rule" id="MF_01320"/>
    </source>
</evidence>
<evidence type="ECO:0000256" key="2">
    <source>
        <dbReference type="SAM" id="MobiDB-lite"/>
    </source>
</evidence>
<evidence type="ECO:0000305" key="3"/>
<feature type="chain" id="PRO_0000129540" description="Large ribosomal subunit protein uL2">
    <location>
        <begin position="1"/>
        <end position="273"/>
    </location>
</feature>
<feature type="region of interest" description="Disordered" evidence="2">
    <location>
        <begin position="224"/>
        <end position="263"/>
    </location>
</feature>
<feature type="compositionally biased region" description="Basic residues" evidence="2">
    <location>
        <begin position="253"/>
        <end position="263"/>
    </location>
</feature>
<keyword id="KW-0687">Ribonucleoprotein</keyword>
<keyword id="KW-0689">Ribosomal protein</keyword>
<keyword id="KW-0694">RNA-binding</keyword>
<keyword id="KW-0699">rRNA-binding</keyword>